<dbReference type="EC" id="1.14.11.-" evidence="1 2"/>
<dbReference type="EMBL" id="MH202990">
    <property type="protein sequence ID" value="AYD91075.1"/>
    <property type="molecule type" value="Genomic_DNA"/>
</dbReference>
<dbReference type="SMR" id="A0A386KZ95"/>
<dbReference type="GO" id="GO:0051213">
    <property type="term" value="F:dioxygenase activity"/>
    <property type="evidence" value="ECO:0007669"/>
    <property type="project" value="UniProtKB-KW"/>
</dbReference>
<dbReference type="GO" id="GO:0046872">
    <property type="term" value="F:metal ion binding"/>
    <property type="evidence" value="ECO:0007669"/>
    <property type="project" value="UniProtKB-KW"/>
</dbReference>
<dbReference type="GO" id="GO:0071244">
    <property type="term" value="P:cellular response to carbon dioxide"/>
    <property type="evidence" value="ECO:0000270"/>
    <property type="project" value="UniProtKB"/>
</dbReference>
<dbReference type="GO" id="GO:0016036">
    <property type="term" value="P:cellular response to phosphate starvation"/>
    <property type="evidence" value="ECO:0000270"/>
    <property type="project" value="UniProtKB"/>
</dbReference>
<dbReference type="Gene3D" id="2.60.120.330">
    <property type="entry name" value="B-lactam Antibiotic, Isopenicillin N Synthase, Chain"/>
    <property type="match status" value="1"/>
</dbReference>
<dbReference type="InterPro" id="IPR026992">
    <property type="entry name" value="DIOX_N"/>
</dbReference>
<dbReference type="InterPro" id="IPR044861">
    <property type="entry name" value="IPNS-like_FE2OG_OXY"/>
</dbReference>
<dbReference type="InterPro" id="IPR027443">
    <property type="entry name" value="IPNS-like_sf"/>
</dbReference>
<dbReference type="InterPro" id="IPR005123">
    <property type="entry name" value="Oxoglu/Fe-dep_dioxygenase_dom"/>
</dbReference>
<dbReference type="PANTHER" id="PTHR10209:SF881">
    <property type="entry name" value="FI07970P-RELATED"/>
    <property type="match status" value="1"/>
</dbReference>
<dbReference type="PANTHER" id="PTHR10209">
    <property type="entry name" value="OXIDOREDUCTASE, 2OG-FE II OXYGENASE FAMILY PROTEIN"/>
    <property type="match status" value="1"/>
</dbReference>
<dbReference type="Pfam" id="PF03171">
    <property type="entry name" value="2OG-FeII_Oxy"/>
    <property type="match status" value="1"/>
</dbReference>
<dbReference type="Pfam" id="PF14226">
    <property type="entry name" value="DIOX_N"/>
    <property type="match status" value="1"/>
</dbReference>
<dbReference type="SUPFAM" id="SSF51197">
    <property type="entry name" value="Clavaminate synthase-like"/>
    <property type="match status" value="1"/>
</dbReference>
<dbReference type="PROSITE" id="PS51471">
    <property type="entry name" value="FE2OG_OXY"/>
    <property type="match status" value="1"/>
</dbReference>
<organism>
    <name type="scientific">Pseudo-nitzschia multiseries</name>
    <name type="common">Marine planktonic diatom</name>
    <name type="synonym">Nitzschia pungens f. multiseries</name>
    <dbReference type="NCBI Taxonomy" id="37319"/>
    <lineage>
        <taxon>Eukaryota</taxon>
        <taxon>Sar</taxon>
        <taxon>Stramenopiles</taxon>
        <taxon>Ochrophyta</taxon>
        <taxon>Bacillariophyta</taxon>
        <taxon>Bacillariophyceae</taxon>
        <taxon>Bacillariophycidae</taxon>
        <taxon>Bacillariales</taxon>
        <taxon>Bacillariaceae</taxon>
        <taxon>Pseudo-nitzschia</taxon>
    </lineage>
</organism>
<accession>A0A386KZ95</accession>
<name>DABC_PSEMU</name>
<protein>
    <recommendedName>
        <fullName evidence="3">Alpha-ketoglutarate dependent kainoid synthase</fullName>
        <shortName evidence="3">Alpha-KG dependent kainoid synthase</shortName>
        <ecNumber evidence="1 2">1.14.11.-</ecNumber>
    </recommendedName>
    <alternativeName>
        <fullName evidence="3">Domoic acid biosynthesis cluster protein C</fullName>
        <shortName evidence="3">PmDabC</shortName>
    </alternativeName>
</protein>
<gene>
    <name evidence="3" type="primary">dabC</name>
</gene>
<comment type="function">
    <text evidence="2">Iron/ascorbate-dependent oxidoreductase: part of the gene cluster that mediates the biosynthesis of domoic acid (DA) and derivatives, natural products with neurochemical activity acting as ionotropic glutamate receptor (iGluR) agonists, thus being neurotoxins causing amnesic shellfish poisoning (ASP) (PubMed:30262498). Catalyzes the conversion of 7'-N-carboxy-L-geranyl-L-glutamic acid (cNGG) to isodomoic acid-A (PubMed:30262498). Also mediates the conversion of N-geranyl-L-glutamic acid (L-NGG) to dainic acid A (PubMed:30262498).</text>
</comment>
<comment type="catalytic activity">
    <reaction evidence="2">
        <text>N-(7'-carboxy-7'-demethylgeranyl)-L-glutamate + 2-oxoglutarate + O2 = isodomoate A + succinate + CO2 + H2O</text>
        <dbReference type="Rhea" id="RHEA:68172"/>
        <dbReference type="ChEBI" id="CHEBI:15377"/>
        <dbReference type="ChEBI" id="CHEBI:15379"/>
        <dbReference type="ChEBI" id="CHEBI:16526"/>
        <dbReference type="ChEBI" id="CHEBI:16810"/>
        <dbReference type="ChEBI" id="CHEBI:30031"/>
        <dbReference type="ChEBI" id="CHEBI:172366"/>
        <dbReference type="ChEBI" id="CHEBI:172367"/>
    </reaction>
    <physiologicalReaction direction="left-to-right" evidence="2">
        <dbReference type="Rhea" id="RHEA:68173"/>
    </physiologicalReaction>
</comment>
<comment type="catalytic activity">
    <reaction evidence="2">
        <text>N-geranyl-L-glutamate + 2-oxoglutarate + O2 = dainate A + succinate + CO2 + H2O</text>
        <dbReference type="Rhea" id="RHEA:68176"/>
        <dbReference type="ChEBI" id="CHEBI:15377"/>
        <dbReference type="ChEBI" id="CHEBI:15379"/>
        <dbReference type="ChEBI" id="CHEBI:16526"/>
        <dbReference type="ChEBI" id="CHEBI:16810"/>
        <dbReference type="ChEBI" id="CHEBI:30031"/>
        <dbReference type="ChEBI" id="CHEBI:172365"/>
        <dbReference type="ChEBI" id="CHEBI:176974"/>
    </reaction>
    <physiologicalReaction direction="left-to-right" evidence="2">
        <dbReference type="Rhea" id="RHEA:68177"/>
    </physiologicalReaction>
</comment>
<comment type="cofactor">
    <cofactor evidence="1">
        <name>Fe(2+)</name>
        <dbReference type="ChEBI" id="CHEBI:29033"/>
    </cofactor>
    <text evidence="1">Binds 1 Fe(2+) ion per subunit.</text>
</comment>
<comment type="pathway">
    <text evidence="2">Secondary metabolite biosynthesis.</text>
</comment>
<comment type="induction">
    <text evidence="2">Up-regulated under phosphate limitation and by increasing partial pressure of CO(2).</text>
</comment>
<comment type="similarity">
    <text evidence="4">Belongs to the iron/ascorbate-dependent oxidoreductase family.</text>
</comment>
<feature type="chain" id="PRO_0000454274" description="Alpha-ketoglutarate dependent kainoid synthase">
    <location>
        <begin position="1"/>
        <end position="373"/>
    </location>
</feature>
<feature type="domain" description="Fe2OG dioxygenase" evidence="1">
    <location>
        <begin position="204"/>
        <end position="320"/>
    </location>
</feature>
<feature type="binding site" evidence="1">
    <location>
        <position position="235"/>
    </location>
    <ligand>
        <name>Fe cation</name>
        <dbReference type="ChEBI" id="CHEBI:24875"/>
    </ligand>
</feature>
<feature type="binding site" evidence="1">
    <location>
        <position position="237"/>
    </location>
    <ligand>
        <name>Fe cation</name>
        <dbReference type="ChEBI" id="CHEBI:24875"/>
    </ligand>
</feature>
<feature type="binding site" evidence="1">
    <location>
        <position position="296"/>
    </location>
    <ligand>
        <name>Fe cation</name>
        <dbReference type="ChEBI" id="CHEBI:24875"/>
    </ligand>
</feature>
<feature type="binding site" evidence="1">
    <location>
        <position position="311"/>
    </location>
    <ligand>
        <name>2-oxoglutarate</name>
        <dbReference type="ChEBI" id="CHEBI:16810"/>
    </ligand>
</feature>
<proteinExistence type="evidence at protein level"/>
<evidence type="ECO:0000255" key="1">
    <source>
        <dbReference type="PROSITE-ProRule" id="PRU00805"/>
    </source>
</evidence>
<evidence type="ECO:0000269" key="2">
    <source>
    </source>
</evidence>
<evidence type="ECO:0000303" key="3">
    <source>
    </source>
</evidence>
<evidence type="ECO:0000305" key="4"/>
<sequence length="373" mass="42448">MTVAINNETVVLTPNEDDVQVNKGKTLETSFPPLKGDDLKWFPRSSLPAEIPAIDIGKVSTKEELEQFLVDIRKSGLFYIVNHGVPEEVSINVYNAFREFISTTTEEERMKYYTDTHFQNGGYVPFQGSSIRGGNLGKPQKDHVVKYFWRGPEVINRTPNEKFTEAHNMHHTETFKVAEKVIRTIFKALKLRFPDFDPMEFENTINSKKMFFTNRIYPQAEPSDEEEITHRLVPHLDTSFITLANQVPADNGFQGLFVETGDGKKVKVPGIRNSYLVFIGQSLSYLTKNYLPSALHGVDKPPSDLFEGSERSSLITFYEPAEIIIPSKNINPNPEETSESCPFFYDIGLTVNDPEGTTWDFVKNKFITGYYAD</sequence>
<reference key="1">
    <citation type="journal article" date="2018" name="Science">
        <title>Biosynthesis of the neurotoxin domoic acid in a bloom-forming diatom.</title>
        <authorList>
            <person name="Brunson J.K."/>
            <person name="McKinnie S.M.K."/>
            <person name="Chekan J.R."/>
            <person name="McCrow J.P."/>
            <person name="Miles Z.D."/>
            <person name="Bertrand E.M."/>
            <person name="Bielinski V.A."/>
            <person name="Luhavaya H."/>
            <person name="Obornik M."/>
            <person name="Smith G.J."/>
            <person name="Hutchins D.A."/>
            <person name="Allen A.E."/>
            <person name="Moore B.S."/>
        </authorList>
    </citation>
    <scope>NUCLEOTIDE SEQUENCE [GENOMIC DNA]</scope>
    <scope>FUNCTION</scope>
    <scope>CATALYTIC ACTIVITY</scope>
    <scope>PATHWAY</scope>
    <scope>INDUCTION BY PHOSPHATE LIMITATION AND CO(2)</scope>
    <source>
        <strain>15091C3</strain>
    </source>
</reference>
<reference key="2">
    <citation type="journal article" date="1998" name="Nat. Toxins">
        <title>The activation of glutamate receptors by kainic acid and domoic acid.</title>
        <authorList>
            <person name="Hampson D.R."/>
            <person name="Manalo J.L."/>
        </authorList>
    </citation>
    <scope>REVIEW ON NEUROTOXIC ACTIVITY</scope>
</reference>
<keyword id="KW-0223">Dioxygenase</keyword>
<keyword id="KW-0408">Iron</keyword>
<keyword id="KW-0479">Metal-binding</keyword>
<keyword id="KW-0560">Oxidoreductase</keyword>